<gene>
    <name evidence="1" type="primary">alaE</name>
    <name type="ordered locus">Y11_38941</name>
</gene>
<evidence type="ECO:0000255" key="1">
    <source>
        <dbReference type="HAMAP-Rule" id="MF_00914"/>
    </source>
</evidence>
<evidence type="ECO:0000305" key="2"/>
<organism>
    <name type="scientific">Yersinia enterocolitica subsp. palearctica serotype O:3 (strain DSM 13030 / CIP 106945 / Y11)</name>
    <dbReference type="NCBI Taxonomy" id="930944"/>
    <lineage>
        <taxon>Bacteria</taxon>
        <taxon>Pseudomonadati</taxon>
        <taxon>Pseudomonadota</taxon>
        <taxon>Gammaproteobacteria</taxon>
        <taxon>Enterobacterales</taxon>
        <taxon>Yersiniaceae</taxon>
        <taxon>Yersinia</taxon>
    </lineage>
</organism>
<accession>E7B4A5</accession>
<protein>
    <recommendedName>
        <fullName evidence="1">L-alanine exporter AlaE</fullName>
    </recommendedName>
</protein>
<proteinExistence type="inferred from homology"/>
<feature type="chain" id="PRO_0000415633" description="L-alanine exporter AlaE">
    <location>
        <begin position="1"/>
        <end position="148"/>
    </location>
</feature>
<feature type="transmembrane region" description="Helical" evidence="1">
    <location>
        <begin position="18"/>
        <end position="38"/>
    </location>
</feature>
<feature type="transmembrane region" description="Helical" evidence="1">
    <location>
        <begin position="49"/>
        <end position="69"/>
    </location>
</feature>
<feature type="transmembrane region" description="Helical" evidence="1">
    <location>
        <begin position="88"/>
        <end position="108"/>
    </location>
</feature>
<feature type="transmembrane region" description="Helical" evidence="1">
    <location>
        <begin position="115"/>
        <end position="135"/>
    </location>
</feature>
<name>ALAE_YERE1</name>
<reference key="1">
    <citation type="journal article" date="2011" name="J. Bacteriol.">
        <title>Complete genome sequence of Yersinia enterocolitica subsp. palearctica serogroup O:3.</title>
        <authorList>
            <person name="Batzilla J."/>
            <person name="Hoper D."/>
            <person name="Antonenka U."/>
            <person name="Heesemann J."/>
            <person name="Rakin A."/>
        </authorList>
    </citation>
    <scope>NUCLEOTIDE SEQUENCE [LARGE SCALE GENOMIC DNA]</scope>
    <source>
        <strain>DSM 13030 / CIP 106945 / Y11</strain>
    </source>
</reference>
<comment type="function">
    <text evidence="1">Exports L-alanine.</text>
</comment>
<comment type="subcellular location">
    <subcellularLocation>
        <location evidence="1">Cell inner membrane</location>
        <topology evidence="1">Multi-pass membrane protein</topology>
    </subcellularLocation>
</comment>
<comment type="similarity">
    <text evidence="1">Belongs to the AlaE exporter family.</text>
</comment>
<comment type="sequence caution" evidence="2">
    <conflict type="erroneous initiation">
        <sequence resource="EMBL-CDS" id="CBY28636"/>
    </conflict>
    <text>Truncated N-terminus.</text>
</comment>
<dbReference type="EMBL" id="FR729477">
    <property type="protein sequence ID" value="CBY28636.1"/>
    <property type="status" value="ALT_INIT"/>
    <property type="molecule type" value="Genomic_DNA"/>
</dbReference>
<dbReference type="SMR" id="E7B4A5"/>
<dbReference type="KEGG" id="yey:Y11_38941"/>
<dbReference type="PATRIC" id="fig|930944.6.peg.3876"/>
<dbReference type="HOGENOM" id="CLU_2775094_0_0_6"/>
<dbReference type="Proteomes" id="UP000008084">
    <property type="component" value="Chromosome"/>
</dbReference>
<dbReference type="GO" id="GO:0005886">
    <property type="term" value="C:plasma membrane"/>
    <property type="evidence" value="ECO:0007669"/>
    <property type="project" value="UniProtKB-SubCell"/>
</dbReference>
<dbReference type="GO" id="GO:0034639">
    <property type="term" value="F:L-amino acid efflux transmembrane transporter activity"/>
    <property type="evidence" value="ECO:0007669"/>
    <property type="project" value="UniProtKB-UniRule"/>
</dbReference>
<dbReference type="GO" id="GO:0032973">
    <property type="term" value="P:amino acid export across plasma membrane"/>
    <property type="evidence" value="ECO:0007669"/>
    <property type="project" value="UniProtKB-UniRule"/>
</dbReference>
<dbReference type="HAMAP" id="MF_00914">
    <property type="entry name" value="L_Ala_exporter"/>
    <property type="match status" value="1"/>
</dbReference>
<dbReference type="InterPro" id="IPR010574">
    <property type="entry name" value="Ala_export_AlaE"/>
</dbReference>
<dbReference type="Pfam" id="PF06610">
    <property type="entry name" value="AlaE"/>
    <property type="match status" value="1"/>
</dbReference>
<sequence>MTMFSTRSRLRSAAADTFALVVYCFVIGMIIEIVISGMTFQQSLSSRLVSIPVNILIAWPYGLYRDAFIRFARRHAGEHMWARNLADLLAYVSFQSPVYALILWSVGADLEQITTAVASNALVSMAMGVAYGYFLEYCRKLFRVAGYI</sequence>
<keyword id="KW-0029">Amino-acid transport</keyword>
<keyword id="KW-0997">Cell inner membrane</keyword>
<keyword id="KW-1003">Cell membrane</keyword>
<keyword id="KW-0472">Membrane</keyword>
<keyword id="KW-0812">Transmembrane</keyword>
<keyword id="KW-1133">Transmembrane helix</keyword>
<keyword id="KW-0813">Transport</keyword>